<dbReference type="EMBL" id="K02337">
    <property type="protein sequence ID" value="AAA26133.1"/>
    <property type="molecule type" value="Genomic_DNA"/>
</dbReference>
<dbReference type="EMBL" id="M28510">
    <property type="protein sequence ID" value="AAA26162.1"/>
    <property type="molecule type" value="Genomic_DNA"/>
</dbReference>
<dbReference type="PIR" id="B21901">
    <property type="entry name" value="LBRFA8"/>
</dbReference>
<dbReference type="RefSeq" id="WP_013068240.1">
    <property type="nucleotide sequence ID" value="NZ_VIBE01000014.1"/>
</dbReference>
<dbReference type="SMR" id="P07367"/>
<dbReference type="OMA" id="SHTTWFP"/>
<dbReference type="GO" id="GO:0019866">
    <property type="term" value="C:organelle inner membrane"/>
    <property type="evidence" value="ECO:0007669"/>
    <property type="project" value="InterPro"/>
</dbReference>
<dbReference type="GO" id="GO:0005886">
    <property type="term" value="C:plasma membrane"/>
    <property type="evidence" value="ECO:0007669"/>
    <property type="project" value="UniProtKB-SubCell"/>
</dbReference>
<dbReference type="GO" id="GO:0030077">
    <property type="term" value="C:plasma membrane light-harvesting complex"/>
    <property type="evidence" value="ECO:0007669"/>
    <property type="project" value="InterPro"/>
</dbReference>
<dbReference type="GO" id="GO:0042314">
    <property type="term" value="F:bacteriochlorophyll binding"/>
    <property type="evidence" value="ECO:0007669"/>
    <property type="project" value="UniProtKB-KW"/>
</dbReference>
<dbReference type="GO" id="GO:0045156">
    <property type="term" value="F:electron transporter, transferring electrons within the cyclic electron transport pathway of photosynthesis activity"/>
    <property type="evidence" value="ECO:0007669"/>
    <property type="project" value="InterPro"/>
</dbReference>
<dbReference type="GO" id="GO:0046872">
    <property type="term" value="F:metal ion binding"/>
    <property type="evidence" value="ECO:0007669"/>
    <property type="project" value="UniProtKB-KW"/>
</dbReference>
<dbReference type="GO" id="GO:0019684">
    <property type="term" value="P:photosynthesis, light reaction"/>
    <property type="evidence" value="ECO:0007669"/>
    <property type="project" value="InterPro"/>
</dbReference>
<dbReference type="Gene3D" id="4.10.220.20">
    <property type="entry name" value="Light-harvesting complex"/>
    <property type="match status" value="1"/>
</dbReference>
<dbReference type="InterPro" id="IPR000066">
    <property type="entry name" value="Antenna_a/b"/>
</dbReference>
<dbReference type="InterPro" id="IPR018332">
    <property type="entry name" value="Antenna_alpha"/>
</dbReference>
<dbReference type="InterPro" id="IPR002361">
    <property type="entry name" value="Antenna_alpha_CS"/>
</dbReference>
<dbReference type="InterPro" id="IPR035889">
    <property type="entry name" value="Light-harvesting_complex"/>
</dbReference>
<dbReference type="Pfam" id="PF00556">
    <property type="entry name" value="LHC"/>
    <property type="match status" value="1"/>
</dbReference>
<dbReference type="PRINTS" id="PR00673">
    <property type="entry name" value="LIGHTHARVSTA"/>
</dbReference>
<dbReference type="SUPFAM" id="SSF56918">
    <property type="entry name" value="Light-harvesting complex subunits"/>
    <property type="match status" value="1"/>
</dbReference>
<dbReference type="PROSITE" id="PS00968">
    <property type="entry name" value="ANTENNA_COMP_ALPHA"/>
    <property type="match status" value="1"/>
</dbReference>
<protein>
    <recommendedName>
        <fullName>Light-harvesting protein B-800/850 alpha chain</fullName>
    </recommendedName>
    <alternativeName>
        <fullName>Antenna pigment protein alpha chain</fullName>
    </alternativeName>
    <alternativeName>
        <fullName>LH-2</fullName>
    </alternativeName>
</protein>
<name>LHA2_RHOCA</name>
<reference key="1">
    <citation type="journal article" date="1985" name="Proc. Natl. Acad. Sci. U.S.A.">
        <title>Light-harvesting II (B800-B850 complex) structural genes from Rhodopseudomonas capsulata.</title>
        <authorList>
            <person name="Youvan D.C."/>
            <person name="Ismail S."/>
        </authorList>
    </citation>
    <scope>NUCLEOTIDE SEQUENCE [GENOMIC DNA]</scope>
</reference>
<reference key="2">
    <citation type="journal article" date="1989" name="J. Bacteriol.">
        <title>Genes downstream from pucB and pucA are essential for formation of the B800-850 complex of Rhodobacter capsulatus.</title>
        <authorList>
            <person name="Tichy H.V."/>
            <person name="Oberle B."/>
            <person name="Stiehle H."/>
            <person name="Schiltz E."/>
            <person name="Drews G."/>
        </authorList>
    </citation>
    <scope>NUCLEOTIDE SEQUENCE [GENOMIC DNA]</scope>
</reference>
<reference key="3">
    <citation type="journal article" date="1983" name="Eur. J. Biochem.">
        <title>The complete amino-acid sequence of the large bacteriochlorophyll-binding polypeptide from light-harvesting complex II (B800-850) of Rhodopseudomonas capsulata.</title>
        <authorList>
            <person name="Tadros M.H."/>
            <person name="Suter F."/>
            <person name="Drews G."/>
            <person name="Zuber H."/>
        </authorList>
    </citation>
    <scope>PROTEIN SEQUENCE</scope>
</reference>
<proteinExistence type="evidence at protein level"/>
<comment type="function">
    <text>Antenna complexes are light-harvesting systems, which transfer the excitation energy to the reaction centers.</text>
</comment>
<comment type="subunit">
    <text>The core complex is formed by different alpha and beta chains, binding bacteriochlorophyll molecules, and arranged most probably in tetrameric structures disposed around the reaction center. The non-pigmented gamma chains may constitute additional components.</text>
</comment>
<comment type="subcellular location">
    <subcellularLocation>
        <location>Cell inner membrane</location>
        <topology>Single-pass type II membrane protein</topology>
    </subcellularLocation>
</comment>
<comment type="similarity">
    <text evidence="2">Belongs to the antenna complex alpha subunit family.</text>
</comment>
<gene>
    <name type="primary">pucA</name>
</gene>
<organism>
    <name type="scientific">Rhodobacter capsulatus</name>
    <name type="common">Rhodopseudomonas capsulata</name>
    <dbReference type="NCBI Taxonomy" id="1061"/>
    <lineage>
        <taxon>Bacteria</taxon>
        <taxon>Pseudomonadati</taxon>
        <taxon>Pseudomonadota</taxon>
        <taxon>Alphaproteobacteria</taxon>
        <taxon>Rhodobacterales</taxon>
        <taxon>Rhodobacter group</taxon>
        <taxon>Rhodobacter</taxon>
    </lineage>
</organism>
<keyword id="KW-0042">Antenna complex</keyword>
<keyword id="KW-0076">Bacteriochlorophyll</keyword>
<keyword id="KW-0997">Cell inner membrane</keyword>
<keyword id="KW-1003">Cell membrane</keyword>
<keyword id="KW-0148">Chlorophyll</keyword>
<keyword id="KW-0157">Chromophore</keyword>
<keyword id="KW-0903">Direct protein sequencing</keyword>
<keyword id="KW-0437">Light-harvesting polypeptide</keyword>
<keyword id="KW-0460">Magnesium</keyword>
<keyword id="KW-0472">Membrane</keyword>
<keyword id="KW-0479">Metal-binding</keyword>
<keyword id="KW-0812">Transmembrane</keyword>
<keyword id="KW-1133">Transmembrane helix</keyword>
<evidence type="ECO:0000255" key="1"/>
<evidence type="ECO:0000305" key="2"/>
<accession>P07367</accession>
<feature type="chain" id="PRO_0000099791" description="Light-harvesting protein B-800/850 alpha chain">
    <location>
        <begin position="1"/>
        <end position="60"/>
    </location>
</feature>
<feature type="topological domain" description="Cytoplasmic" evidence="1">
    <location>
        <begin position="1"/>
        <end position="14"/>
    </location>
</feature>
<feature type="transmembrane region" description="Helical" evidence="1">
    <location>
        <begin position="15"/>
        <end position="35"/>
    </location>
</feature>
<feature type="topological domain" description="Periplasmic" evidence="1">
    <location>
        <begin position="36"/>
        <end position="60"/>
    </location>
</feature>
<feature type="binding site" description="axial binding residue" evidence="1">
    <location>
        <position position="31"/>
    </location>
    <ligand>
        <name>a bacteriochlorophyll</name>
        <dbReference type="ChEBI" id="CHEBI:38201"/>
    </ligand>
    <ligandPart>
        <name>Mg</name>
        <dbReference type="ChEBI" id="CHEBI:25107"/>
    </ligandPart>
</feature>
<sequence>MNNAKIWTVVKPSTGIPLILGAVAVAALIVHAGLLTNTTWFANYWNGNPMATVVAVAPAQ</sequence>